<evidence type="ECO:0000305" key="1"/>
<gene>
    <name type="ordered locus">VC_A0580</name>
</gene>
<feature type="chain" id="PRO_0000156687" description="Putative esterase VC_A0580">
    <location>
        <begin position="1"/>
        <end position="150"/>
    </location>
</feature>
<proteinExistence type="inferred from homology"/>
<dbReference type="EC" id="3.1.2.-"/>
<dbReference type="EMBL" id="AE003853">
    <property type="protein sequence ID" value="AAF96482.1"/>
    <property type="status" value="ALT_INIT"/>
    <property type="molecule type" value="Genomic_DNA"/>
</dbReference>
<dbReference type="PIR" id="C82441">
    <property type="entry name" value="C82441"/>
</dbReference>
<dbReference type="RefSeq" id="WP_001909330.1">
    <property type="nucleotide sequence ID" value="NZ_LT906615.1"/>
</dbReference>
<dbReference type="SMR" id="Q9KM09"/>
<dbReference type="STRING" id="243277.VC_A0580"/>
<dbReference type="DNASU" id="2612412"/>
<dbReference type="EnsemblBacteria" id="AAF96482">
    <property type="protein sequence ID" value="AAF96482"/>
    <property type="gene ID" value="VC_A0580"/>
</dbReference>
<dbReference type="KEGG" id="vch:VC_A0580"/>
<dbReference type="eggNOG" id="COG2050">
    <property type="taxonomic scope" value="Bacteria"/>
</dbReference>
<dbReference type="HOGENOM" id="CLU_089876_13_1_6"/>
<dbReference type="Proteomes" id="UP000000584">
    <property type="component" value="Chromosome 2"/>
</dbReference>
<dbReference type="GO" id="GO:0005829">
    <property type="term" value="C:cytosol"/>
    <property type="evidence" value="ECO:0000318"/>
    <property type="project" value="GO_Central"/>
</dbReference>
<dbReference type="GO" id="GO:0061522">
    <property type="term" value="F:1,4-dihydroxy-2-naphthoyl-CoA thioesterase activity"/>
    <property type="evidence" value="ECO:0000318"/>
    <property type="project" value="GO_Central"/>
</dbReference>
<dbReference type="CDD" id="cd03443">
    <property type="entry name" value="PaaI_thioesterase"/>
    <property type="match status" value="1"/>
</dbReference>
<dbReference type="FunFam" id="3.10.129.10:FF:000002">
    <property type="entry name" value="1,4-dihydroxy-2-naphthoyl-CoA hydrolase"/>
    <property type="match status" value="1"/>
</dbReference>
<dbReference type="Gene3D" id="3.10.129.10">
    <property type="entry name" value="Hotdog Thioesterase"/>
    <property type="match status" value="1"/>
</dbReference>
<dbReference type="InterPro" id="IPR029069">
    <property type="entry name" value="HotDog_dom_sf"/>
</dbReference>
<dbReference type="InterPro" id="IPR003736">
    <property type="entry name" value="PAAI_dom"/>
</dbReference>
<dbReference type="InterPro" id="IPR006683">
    <property type="entry name" value="Thioestr_dom"/>
</dbReference>
<dbReference type="NCBIfam" id="TIGR00369">
    <property type="entry name" value="unchar_dom_1"/>
    <property type="match status" value="1"/>
</dbReference>
<dbReference type="PANTHER" id="PTHR43240">
    <property type="entry name" value="1,4-DIHYDROXY-2-NAPHTHOYL-COA THIOESTERASE 1"/>
    <property type="match status" value="1"/>
</dbReference>
<dbReference type="PANTHER" id="PTHR43240:SF5">
    <property type="entry name" value="1,4-DIHYDROXY-2-NAPHTHOYL-COA THIOESTERASE 1"/>
    <property type="match status" value="1"/>
</dbReference>
<dbReference type="Pfam" id="PF03061">
    <property type="entry name" value="4HBT"/>
    <property type="match status" value="1"/>
</dbReference>
<dbReference type="SUPFAM" id="SSF54637">
    <property type="entry name" value="Thioesterase/thiol ester dehydrase-isomerase"/>
    <property type="match status" value="1"/>
</dbReference>
<name>Y3380_VIBCH</name>
<organism>
    <name type="scientific">Vibrio cholerae serotype O1 (strain ATCC 39315 / El Tor Inaba N16961)</name>
    <dbReference type="NCBI Taxonomy" id="243277"/>
    <lineage>
        <taxon>Bacteria</taxon>
        <taxon>Pseudomonadati</taxon>
        <taxon>Pseudomonadota</taxon>
        <taxon>Gammaproteobacteria</taxon>
        <taxon>Vibrionales</taxon>
        <taxon>Vibrionaceae</taxon>
        <taxon>Vibrio</taxon>
    </lineage>
</organism>
<keyword id="KW-0378">Hydrolase</keyword>
<keyword id="KW-1185">Reference proteome</keyword>
<accession>Q9KM09</accession>
<comment type="similarity">
    <text evidence="1">Belongs to the thioesterase PaaI family.</text>
</comment>
<comment type="sequence caution" evidence="1">
    <conflict type="erroneous initiation">
        <sequence resource="EMBL-CDS" id="AAF96482"/>
    </conflict>
</comment>
<sequence length="150" mass="16212">MSIWNKPISLEILNATSKNTLIEHLNIIYTEVTENSISATMPVCHFTHQPLGMLHGGASVVLAETLGSVAANFSVGEDAYCVGLDINANHVRAMREGLVTGTAVPLHIGVSTQVWQIEIKDEQGRLVCISRLTVAVKRSRPNQAKPVAEV</sequence>
<protein>
    <recommendedName>
        <fullName>Putative esterase VC_A0580</fullName>
        <ecNumber>3.1.2.-</ecNumber>
    </recommendedName>
</protein>
<reference key="1">
    <citation type="journal article" date="2000" name="Nature">
        <title>DNA sequence of both chromosomes of the cholera pathogen Vibrio cholerae.</title>
        <authorList>
            <person name="Heidelberg J.F."/>
            <person name="Eisen J.A."/>
            <person name="Nelson W.C."/>
            <person name="Clayton R.A."/>
            <person name="Gwinn M.L."/>
            <person name="Dodson R.J."/>
            <person name="Haft D.H."/>
            <person name="Hickey E.K."/>
            <person name="Peterson J.D."/>
            <person name="Umayam L.A."/>
            <person name="Gill S.R."/>
            <person name="Nelson K.E."/>
            <person name="Read T.D."/>
            <person name="Tettelin H."/>
            <person name="Richardson D.L."/>
            <person name="Ermolaeva M.D."/>
            <person name="Vamathevan J.J."/>
            <person name="Bass S."/>
            <person name="Qin H."/>
            <person name="Dragoi I."/>
            <person name="Sellers P."/>
            <person name="McDonald L.A."/>
            <person name="Utterback T.R."/>
            <person name="Fleischmann R.D."/>
            <person name="Nierman W.C."/>
            <person name="White O."/>
            <person name="Salzberg S.L."/>
            <person name="Smith H.O."/>
            <person name="Colwell R.R."/>
            <person name="Mekalanos J.J."/>
            <person name="Venter J.C."/>
            <person name="Fraser C.M."/>
        </authorList>
    </citation>
    <scope>NUCLEOTIDE SEQUENCE [LARGE SCALE GENOMIC DNA]</scope>
    <source>
        <strain>ATCC 39315 / El Tor Inaba N16961</strain>
    </source>
</reference>